<dbReference type="EMBL" id="DQ643392">
    <property type="protein sequence ID" value="ABF82112.1"/>
    <property type="molecule type" value="Genomic_DNA"/>
</dbReference>
<dbReference type="RefSeq" id="YP_654654.1">
    <property type="nucleotide sequence ID" value="NC_008187.1"/>
</dbReference>
<dbReference type="KEGG" id="vg:4156293"/>
<dbReference type="OrthoDB" id="34053at10239"/>
<dbReference type="Proteomes" id="UP000001358">
    <property type="component" value="Genome"/>
</dbReference>
<proteinExistence type="predicted"/>
<keyword id="KW-1185">Reference proteome</keyword>
<gene>
    <name type="ORF">IIV3-082L</name>
</gene>
<organismHost>
    <name type="scientific">Aedes vexans</name>
    <name type="common">Inland floodwater mosquito</name>
    <name type="synonym">Culex vexans</name>
    <dbReference type="NCBI Taxonomy" id="7163"/>
</organismHost>
<organismHost>
    <name type="scientific">Culex territans</name>
    <dbReference type="NCBI Taxonomy" id="42431"/>
</organismHost>
<organismHost>
    <name type="scientific">Culiseta annulata</name>
    <dbReference type="NCBI Taxonomy" id="332058"/>
</organismHost>
<organismHost>
    <name type="scientific">Ochlerotatus sollicitans</name>
    <name type="common">eastern saltmarsh mosquito</name>
    <dbReference type="NCBI Taxonomy" id="310513"/>
</organismHost>
<organismHost>
    <name type="scientific">Ochlerotatus taeniorhynchus</name>
    <name type="common">Black salt marsh mosquito</name>
    <name type="synonym">Aedes taeniorhynchus</name>
    <dbReference type="NCBI Taxonomy" id="329105"/>
</organismHost>
<organismHost>
    <name type="scientific">Psorophora ferox</name>
    <dbReference type="NCBI Taxonomy" id="7183"/>
</organismHost>
<reference key="1">
    <citation type="journal article" date="2006" name="J. Virol.">
        <title>Genome of invertebrate iridescent virus type 3 (mosquito iridescent virus).</title>
        <authorList>
            <person name="Delhon G."/>
            <person name="Tulman E.R."/>
            <person name="Afonso C.L."/>
            <person name="Lu Z."/>
            <person name="Becnel J.J."/>
            <person name="Moser B.A."/>
            <person name="Kutish G.F."/>
            <person name="Rock D.L."/>
        </authorList>
    </citation>
    <scope>NUCLEOTIDE SEQUENCE [LARGE SCALE GENOMIC DNA]</scope>
</reference>
<sequence length="162" mass="18900">MKYGLFLSQLERLVARWALVESPIVIKLGTRCRITLRKRHVDWTSHRFVVFPVKIYGLCVRHMNVLVWDMGHQRVERFEPFRMGFPEVQPTIDGALTNLLNQLAAADGSQTLQYRTLVTAWGNKSDHVDTHCCRWCLEWLEKKFPPPVEVGKNQGEKKQINK</sequence>
<name>082L_IIV3</name>
<accession>Q196X8</accession>
<protein>
    <recommendedName>
        <fullName>Uncharacterized protein 082L</fullName>
    </recommendedName>
</protein>
<feature type="chain" id="PRO_0000377807" description="Uncharacterized protein 082L">
    <location>
        <begin position="1"/>
        <end position="162"/>
    </location>
</feature>
<organism>
    <name type="scientific">Invertebrate iridescent virus 3</name>
    <name type="common">IIV-3</name>
    <name type="synonym">Mosquito iridescent virus</name>
    <dbReference type="NCBI Taxonomy" id="345201"/>
    <lineage>
        <taxon>Viruses</taxon>
        <taxon>Varidnaviria</taxon>
        <taxon>Bamfordvirae</taxon>
        <taxon>Nucleocytoviricota</taxon>
        <taxon>Megaviricetes</taxon>
        <taxon>Pimascovirales</taxon>
        <taxon>Iridoviridae</taxon>
        <taxon>Betairidovirinae</taxon>
        <taxon>Chloriridovirus</taxon>
    </lineage>
</organism>